<accession>B1I196</accession>
<name>RL25_DESAP</name>
<gene>
    <name evidence="1" type="primary">rplY</name>
    <name evidence="1" type="synonym">ctc</name>
    <name type="ordered locus">Daud_0070</name>
</gene>
<feature type="chain" id="PRO_1000142515" description="Large ribosomal subunit protein bL25">
    <location>
        <begin position="1"/>
        <end position="211"/>
    </location>
</feature>
<feature type="region of interest" description="Disordered" evidence="2">
    <location>
        <begin position="188"/>
        <end position="211"/>
    </location>
</feature>
<feature type="compositionally biased region" description="Low complexity" evidence="2">
    <location>
        <begin position="200"/>
        <end position="211"/>
    </location>
</feature>
<sequence length="211" mass="23036">MAVVDLKARPRAGRGKGYRNRLKQNGLIPAVIYGKEVGSLLLEVETRAVQDILTKTGRNALIQLRVEPEKGRAKKYDAIIKDVHMHPYKNEFFHVDFHQISLKDELTTSVNLKLTGSAPGVTAGGRLEQLIRQVEVSCLPRNIPDHIEVDVSGLGIGDAIHVSDLKAPEGVKFETDGDVTVVTLIAPHREEEKAPEETGEAAPAPTPETGQ</sequence>
<protein>
    <recommendedName>
        <fullName evidence="1">Large ribosomal subunit protein bL25</fullName>
    </recommendedName>
    <alternativeName>
        <fullName evidence="3">50S ribosomal protein L25</fullName>
    </alternativeName>
    <alternativeName>
        <fullName evidence="1">General stress protein CTC</fullName>
    </alternativeName>
</protein>
<organism>
    <name type="scientific">Desulforudis audaxviator (strain MP104C)</name>
    <dbReference type="NCBI Taxonomy" id="477974"/>
    <lineage>
        <taxon>Bacteria</taxon>
        <taxon>Bacillati</taxon>
        <taxon>Bacillota</taxon>
        <taxon>Clostridia</taxon>
        <taxon>Thermoanaerobacterales</taxon>
        <taxon>Candidatus Desulforudaceae</taxon>
        <taxon>Candidatus Desulforudis</taxon>
    </lineage>
</organism>
<dbReference type="EMBL" id="CP000860">
    <property type="protein sequence ID" value="ACA58638.1"/>
    <property type="molecule type" value="Genomic_DNA"/>
</dbReference>
<dbReference type="RefSeq" id="WP_012301232.1">
    <property type="nucleotide sequence ID" value="NC_010424.1"/>
</dbReference>
<dbReference type="SMR" id="B1I196"/>
<dbReference type="STRING" id="477974.Daud_0070"/>
<dbReference type="KEGG" id="dau:Daud_0070"/>
<dbReference type="eggNOG" id="COG1825">
    <property type="taxonomic scope" value="Bacteria"/>
</dbReference>
<dbReference type="HOGENOM" id="CLU_075939_2_1_9"/>
<dbReference type="OrthoDB" id="9790002at2"/>
<dbReference type="Proteomes" id="UP000008544">
    <property type="component" value="Chromosome"/>
</dbReference>
<dbReference type="GO" id="GO:0022625">
    <property type="term" value="C:cytosolic large ribosomal subunit"/>
    <property type="evidence" value="ECO:0007669"/>
    <property type="project" value="TreeGrafter"/>
</dbReference>
<dbReference type="GO" id="GO:0008097">
    <property type="term" value="F:5S rRNA binding"/>
    <property type="evidence" value="ECO:0007669"/>
    <property type="project" value="InterPro"/>
</dbReference>
<dbReference type="GO" id="GO:0003735">
    <property type="term" value="F:structural constituent of ribosome"/>
    <property type="evidence" value="ECO:0007669"/>
    <property type="project" value="InterPro"/>
</dbReference>
<dbReference type="GO" id="GO:0006412">
    <property type="term" value="P:translation"/>
    <property type="evidence" value="ECO:0007669"/>
    <property type="project" value="UniProtKB-UniRule"/>
</dbReference>
<dbReference type="CDD" id="cd00495">
    <property type="entry name" value="Ribosomal_L25_TL5_CTC"/>
    <property type="match status" value="1"/>
</dbReference>
<dbReference type="Gene3D" id="2.170.120.20">
    <property type="entry name" value="Ribosomal protein L25, beta domain"/>
    <property type="match status" value="1"/>
</dbReference>
<dbReference type="Gene3D" id="2.40.240.10">
    <property type="entry name" value="Ribosomal Protein L25, Chain P"/>
    <property type="match status" value="1"/>
</dbReference>
<dbReference type="HAMAP" id="MF_01334">
    <property type="entry name" value="Ribosomal_bL25_CTC"/>
    <property type="match status" value="1"/>
</dbReference>
<dbReference type="InterPro" id="IPR020056">
    <property type="entry name" value="Rbsml_bL25/Gln-tRNA_synth_N"/>
</dbReference>
<dbReference type="InterPro" id="IPR011035">
    <property type="entry name" value="Ribosomal_bL25/Gln-tRNA_synth"/>
</dbReference>
<dbReference type="InterPro" id="IPR020057">
    <property type="entry name" value="Ribosomal_bL25_b-dom"/>
</dbReference>
<dbReference type="InterPro" id="IPR037121">
    <property type="entry name" value="Ribosomal_bL25_C"/>
</dbReference>
<dbReference type="InterPro" id="IPR001021">
    <property type="entry name" value="Ribosomal_bL25_long"/>
</dbReference>
<dbReference type="InterPro" id="IPR029751">
    <property type="entry name" value="Ribosomal_L25_dom"/>
</dbReference>
<dbReference type="InterPro" id="IPR020930">
    <property type="entry name" value="Ribosomal_uL5_bac-type"/>
</dbReference>
<dbReference type="NCBIfam" id="TIGR00731">
    <property type="entry name" value="bL25_bact_ctc"/>
    <property type="match status" value="1"/>
</dbReference>
<dbReference type="PANTHER" id="PTHR33284">
    <property type="entry name" value="RIBOSOMAL PROTEIN L25/GLN-TRNA SYNTHETASE, ANTI-CODON-BINDING DOMAIN-CONTAINING PROTEIN"/>
    <property type="match status" value="1"/>
</dbReference>
<dbReference type="PANTHER" id="PTHR33284:SF1">
    <property type="entry name" value="RIBOSOMAL PROTEIN L25_GLN-TRNA SYNTHETASE, ANTI-CODON-BINDING DOMAIN-CONTAINING PROTEIN"/>
    <property type="match status" value="1"/>
</dbReference>
<dbReference type="Pfam" id="PF01386">
    <property type="entry name" value="Ribosomal_L25p"/>
    <property type="match status" value="1"/>
</dbReference>
<dbReference type="Pfam" id="PF14693">
    <property type="entry name" value="Ribosomal_TL5_C"/>
    <property type="match status" value="1"/>
</dbReference>
<dbReference type="SUPFAM" id="SSF50715">
    <property type="entry name" value="Ribosomal protein L25-like"/>
    <property type="match status" value="1"/>
</dbReference>
<proteinExistence type="inferred from homology"/>
<comment type="function">
    <text evidence="1">This is one of the proteins that binds to the 5S RNA in the ribosome where it forms part of the central protuberance.</text>
</comment>
<comment type="subunit">
    <text evidence="1">Part of the 50S ribosomal subunit; part of the 5S rRNA/L5/L18/L25 subcomplex. Contacts the 5S rRNA. Binds to the 5S rRNA independently of L5 and L18.</text>
</comment>
<comment type="similarity">
    <text evidence="1">Belongs to the bacterial ribosomal protein bL25 family. CTC subfamily.</text>
</comment>
<reference key="1">
    <citation type="submission" date="2007-10" db="EMBL/GenBank/DDBJ databases">
        <title>Complete sequence of chromosome of Desulforudis audaxviator MP104C.</title>
        <authorList>
            <person name="Copeland A."/>
            <person name="Lucas S."/>
            <person name="Lapidus A."/>
            <person name="Barry K."/>
            <person name="Glavina del Rio T."/>
            <person name="Dalin E."/>
            <person name="Tice H."/>
            <person name="Bruce D."/>
            <person name="Pitluck S."/>
            <person name="Lowry S.R."/>
            <person name="Larimer F."/>
            <person name="Land M.L."/>
            <person name="Hauser L."/>
            <person name="Kyrpides N."/>
            <person name="Ivanova N.N."/>
            <person name="Richardson P."/>
        </authorList>
    </citation>
    <scope>NUCLEOTIDE SEQUENCE [LARGE SCALE GENOMIC DNA]</scope>
    <source>
        <strain>MP104C</strain>
    </source>
</reference>
<evidence type="ECO:0000255" key="1">
    <source>
        <dbReference type="HAMAP-Rule" id="MF_01334"/>
    </source>
</evidence>
<evidence type="ECO:0000256" key="2">
    <source>
        <dbReference type="SAM" id="MobiDB-lite"/>
    </source>
</evidence>
<evidence type="ECO:0000305" key="3"/>
<keyword id="KW-1185">Reference proteome</keyword>
<keyword id="KW-0687">Ribonucleoprotein</keyword>
<keyword id="KW-0689">Ribosomal protein</keyword>
<keyword id="KW-0694">RNA-binding</keyword>
<keyword id="KW-0699">rRNA-binding</keyword>